<dbReference type="EC" id="2.8.4.4" evidence="1"/>
<dbReference type="EMBL" id="CP000463">
    <property type="protein sequence ID" value="ABJ06977.1"/>
    <property type="molecule type" value="Genomic_DNA"/>
</dbReference>
<dbReference type="SMR" id="Q07M57"/>
<dbReference type="STRING" id="316055.RPE_3040"/>
<dbReference type="KEGG" id="rpe:RPE_3040"/>
<dbReference type="eggNOG" id="COG0621">
    <property type="taxonomic scope" value="Bacteria"/>
</dbReference>
<dbReference type="HOGENOM" id="CLU_018697_0_0_5"/>
<dbReference type="OrthoDB" id="9805215at2"/>
<dbReference type="GO" id="GO:0005829">
    <property type="term" value="C:cytosol"/>
    <property type="evidence" value="ECO:0007669"/>
    <property type="project" value="TreeGrafter"/>
</dbReference>
<dbReference type="GO" id="GO:0051539">
    <property type="term" value="F:4 iron, 4 sulfur cluster binding"/>
    <property type="evidence" value="ECO:0007669"/>
    <property type="project" value="UniProtKB-UniRule"/>
</dbReference>
<dbReference type="GO" id="GO:0035599">
    <property type="term" value="F:aspartic acid methylthiotransferase activity"/>
    <property type="evidence" value="ECO:0007669"/>
    <property type="project" value="TreeGrafter"/>
</dbReference>
<dbReference type="GO" id="GO:0046872">
    <property type="term" value="F:metal ion binding"/>
    <property type="evidence" value="ECO:0007669"/>
    <property type="project" value="UniProtKB-KW"/>
</dbReference>
<dbReference type="GO" id="GO:0103039">
    <property type="term" value="F:protein methylthiotransferase activity"/>
    <property type="evidence" value="ECO:0007669"/>
    <property type="project" value="UniProtKB-EC"/>
</dbReference>
<dbReference type="GO" id="GO:0006400">
    <property type="term" value="P:tRNA modification"/>
    <property type="evidence" value="ECO:0007669"/>
    <property type="project" value="InterPro"/>
</dbReference>
<dbReference type="CDD" id="cd01335">
    <property type="entry name" value="Radical_SAM"/>
    <property type="match status" value="1"/>
</dbReference>
<dbReference type="FunFam" id="3.40.50.12160:FF:000002">
    <property type="entry name" value="Ribosomal protein S12 methylthiotransferase RimO"/>
    <property type="match status" value="1"/>
</dbReference>
<dbReference type="FunFam" id="3.80.30.20:FF:000001">
    <property type="entry name" value="tRNA-2-methylthio-N(6)-dimethylallyladenosine synthase 2"/>
    <property type="match status" value="1"/>
</dbReference>
<dbReference type="Gene3D" id="3.40.50.12160">
    <property type="entry name" value="Methylthiotransferase, N-terminal domain"/>
    <property type="match status" value="1"/>
</dbReference>
<dbReference type="Gene3D" id="2.40.50.140">
    <property type="entry name" value="Nucleic acid-binding proteins"/>
    <property type="match status" value="1"/>
</dbReference>
<dbReference type="Gene3D" id="3.80.30.20">
    <property type="entry name" value="tm_1862 like domain"/>
    <property type="match status" value="1"/>
</dbReference>
<dbReference type="HAMAP" id="MF_01865">
    <property type="entry name" value="MTTase_RimO"/>
    <property type="match status" value="1"/>
</dbReference>
<dbReference type="InterPro" id="IPR006638">
    <property type="entry name" value="Elp3/MiaA/NifB-like_rSAM"/>
</dbReference>
<dbReference type="InterPro" id="IPR005839">
    <property type="entry name" value="Methylthiotransferase"/>
</dbReference>
<dbReference type="InterPro" id="IPR020612">
    <property type="entry name" value="Methylthiotransferase_CS"/>
</dbReference>
<dbReference type="InterPro" id="IPR013848">
    <property type="entry name" value="Methylthiotransferase_N"/>
</dbReference>
<dbReference type="InterPro" id="IPR038135">
    <property type="entry name" value="Methylthiotransferase_N_sf"/>
</dbReference>
<dbReference type="InterPro" id="IPR012340">
    <property type="entry name" value="NA-bd_OB-fold"/>
</dbReference>
<dbReference type="InterPro" id="IPR005840">
    <property type="entry name" value="Ribosomal_uS12_MeSTrfase_RimO"/>
</dbReference>
<dbReference type="InterPro" id="IPR007197">
    <property type="entry name" value="rSAM"/>
</dbReference>
<dbReference type="InterPro" id="IPR023404">
    <property type="entry name" value="rSAM_horseshoe"/>
</dbReference>
<dbReference type="InterPro" id="IPR002792">
    <property type="entry name" value="TRAM_dom"/>
</dbReference>
<dbReference type="NCBIfam" id="TIGR01125">
    <property type="entry name" value="30S ribosomal protein S12 methylthiotransferase RimO"/>
    <property type="match status" value="1"/>
</dbReference>
<dbReference type="NCBIfam" id="TIGR00089">
    <property type="entry name" value="MiaB/RimO family radical SAM methylthiotransferase"/>
    <property type="match status" value="1"/>
</dbReference>
<dbReference type="PANTHER" id="PTHR43837">
    <property type="entry name" value="RIBOSOMAL PROTEIN S12 METHYLTHIOTRANSFERASE RIMO"/>
    <property type="match status" value="1"/>
</dbReference>
<dbReference type="PANTHER" id="PTHR43837:SF1">
    <property type="entry name" value="RIBOSOMAL PROTEIN US12 METHYLTHIOTRANSFERASE RIMO"/>
    <property type="match status" value="1"/>
</dbReference>
<dbReference type="Pfam" id="PF04055">
    <property type="entry name" value="Radical_SAM"/>
    <property type="match status" value="1"/>
</dbReference>
<dbReference type="Pfam" id="PF18693">
    <property type="entry name" value="TRAM_2"/>
    <property type="match status" value="1"/>
</dbReference>
<dbReference type="Pfam" id="PF00919">
    <property type="entry name" value="UPF0004"/>
    <property type="match status" value="1"/>
</dbReference>
<dbReference type="SFLD" id="SFLDG01082">
    <property type="entry name" value="B12-binding_domain_containing"/>
    <property type="match status" value="1"/>
</dbReference>
<dbReference type="SFLD" id="SFLDG01061">
    <property type="entry name" value="methylthiotransferase"/>
    <property type="match status" value="1"/>
</dbReference>
<dbReference type="SFLD" id="SFLDF00274">
    <property type="entry name" value="ribosomal_protein_S12_methylth"/>
    <property type="match status" value="1"/>
</dbReference>
<dbReference type="SMART" id="SM00729">
    <property type="entry name" value="Elp3"/>
    <property type="match status" value="1"/>
</dbReference>
<dbReference type="SUPFAM" id="SSF102114">
    <property type="entry name" value="Radical SAM enzymes"/>
    <property type="match status" value="1"/>
</dbReference>
<dbReference type="PROSITE" id="PS51449">
    <property type="entry name" value="MTTASE_N"/>
    <property type="match status" value="1"/>
</dbReference>
<dbReference type="PROSITE" id="PS01278">
    <property type="entry name" value="MTTASE_RADICAL"/>
    <property type="match status" value="1"/>
</dbReference>
<dbReference type="PROSITE" id="PS51918">
    <property type="entry name" value="RADICAL_SAM"/>
    <property type="match status" value="1"/>
</dbReference>
<dbReference type="PROSITE" id="PS50926">
    <property type="entry name" value="TRAM"/>
    <property type="match status" value="1"/>
</dbReference>
<name>RIMO_RHOP5</name>
<accession>Q07M57</accession>
<organism>
    <name type="scientific">Rhodopseudomonas palustris (strain BisA53)</name>
    <dbReference type="NCBI Taxonomy" id="316055"/>
    <lineage>
        <taxon>Bacteria</taxon>
        <taxon>Pseudomonadati</taxon>
        <taxon>Pseudomonadota</taxon>
        <taxon>Alphaproteobacteria</taxon>
        <taxon>Hyphomicrobiales</taxon>
        <taxon>Nitrobacteraceae</taxon>
        <taxon>Rhodopseudomonas</taxon>
    </lineage>
</organism>
<keyword id="KW-0004">4Fe-4S</keyword>
<keyword id="KW-0963">Cytoplasm</keyword>
<keyword id="KW-0408">Iron</keyword>
<keyword id="KW-0411">Iron-sulfur</keyword>
<keyword id="KW-0479">Metal-binding</keyword>
<keyword id="KW-0949">S-adenosyl-L-methionine</keyword>
<keyword id="KW-0808">Transferase</keyword>
<protein>
    <recommendedName>
        <fullName evidence="1">Ribosomal protein uS12 methylthiotransferase RimO</fullName>
        <shortName evidence="1">uS12 MTTase</shortName>
        <shortName evidence="1">uS12 methylthiotransferase</shortName>
        <ecNumber evidence="1">2.8.4.4</ecNumber>
    </recommendedName>
    <alternativeName>
        <fullName evidence="1">Ribosomal protein uS12 (aspartate-C(3))-methylthiotransferase</fullName>
    </alternativeName>
    <alternativeName>
        <fullName evidence="1">Ribosome maturation factor RimO</fullName>
    </alternativeName>
</protein>
<proteinExistence type="inferred from homology"/>
<reference key="1">
    <citation type="submission" date="2006-09" db="EMBL/GenBank/DDBJ databases">
        <title>Complete sequence of Rhodopseudomonas palustris BisA53.</title>
        <authorList>
            <consortium name="US DOE Joint Genome Institute"/>
            <person name="Copeland A."/>
            <person name="Lucas S."/>
            <person name="Lapidus A."/>
            <person name="Barry K."/>
            <person name="Detter J.C."/>
            <person name="Glavina del Rio T."/>
            <person name="Hammon N."/>
            <person name="Israni S."/>
            <person name="Dalin E."/>
            <person name="Tice H."/>
            <person name="Pitluck S."/>
            <person name="Chain P."/>
            <person name="Malfatti S."/>
            <person name="Shin M."/>
            <person name="Vergez L."/>
            <person name="Schmutz J."/>
            <person name="Larimer F."/>
            <person name="Land M."/>
            <person name="Hauser L."/>
            <person name="Pelletier D.A."/>
            <person name="Kyrpides N."/>
            <person name="Kim E."/>
            <person name="Harwood C.S."/>
            <person name="Oda Y."/>
            <person name="Richardson P."/>
        </authorList>
    </citation>
    <scope>NUCLEOTIDE SEQUENCE [LARGE SCALE GENOMIC DNA]</scope>
    <source>
        <strain>BisA53</strain>
    </source>
</reference>
<evidence type="ECO:0000255" key="1">
    <source>
        <dbReference type="HAMAP-Rule" id="MF_01865"/>
    </source>
</evidence>
<evidence type="ECO:0000255" key="2">
    <source>
        <dbReference type="PROSITE-ProRule" id="PRU01266"/>
    </source>
</evidence>
<sequence length="441" mass="48815">MEQAPAPKISFVSLGCPKALVDSERIITRLRAEGYELARKHDGADIVIVNTCGFLDSAKQESLGAIGEAMAENGKVIVTGCMGAEPEQIEAAYPNVLSITGPQQYESVLEAVHRALPPIHNPHLDLMPPQGIKLTPRHYAYLKISEGCNNRCSFCIIPKLRGDLVSRPAAEVLREAEQLVKAGVKELLVVSQDTSAYGVDLKYAESQWQDRAVRARFYDLAKELGSLGAWVRLQYVYPYPHVDEVIELMAKGAVLPYLDIPFQHAASSVLTRMKRPAAQDKTLARIKRWRETCPDLALRSTFIVGFPGETEQEFAELLDWLEEAEIDRLGAFKYEPVQGAASNALPDQIPAEVKQQRWDALMARQQKISARRLKRKVGTRQQVIIDEAGPNGAKGRSKADAPQIDGHVYLSSRRPLRVGELVTAKIDRADAYDLHGTVAGF</sequence>
<gene>
    <name evidence="1" type="primary">rimO</name>
    <name type="ordered locus">RPE_3040</name>
</gene>
<comment type="function">
    <text evidence="1">Catalyzes the methylthiolation of an aspartic acid residue of ribosomal protein uS12.</text>
</comment>
<comment type="catalytic activity">
    <reaction evidence="1">
        <text>L-aspartate(89)-[ribosomal protein uS12]-hydrogen + (sulfur carrier)-SH + AH2 + 2 S-adenosyl-L-methionine = 3-methylsulfanyl-L-aspartate(89)-[ribosomal protein uS12]-hydrogen + (sulfur carrier)-H + 5'-deoxyadenosine + L-methionine + A + S-adenosyl-L-homocysteine + 2 H(+)</text>
        <dbReference type="Rhea" id="RHEA:37087"/>
        <dbReference type="Rhea" id="RHEA-COMP:10460"/>
        <dbReference type="Rhea" id="RHEA-COMP:10461"/>
        <dbReference type="Rhea" id="RHEA-COMP:14737"/>
        <dbReference type="Rhea" id="RHEA-COMP:14739"/>
        <dbReference type="ChEBI" id="CHEBI:13193"/>
        <dbReference type="ChEBI" id="CHEBI:15378"/>
        <dbReference type="ChEBI" id="CHEBI:17319"/>
        <dbReference type="ChEBI" id="CHEBI:17499"/>
        <dbReference type="ChEBI" id="CHEBI:29917"/>
        <dbReference type="ChEBI" id="CHEBI:29961"/>
        <dbReference type="ChEBI" id="CHEBI:57844"/>
        <dbReference type="ChEBI" id="CHEBI:57856"/>
        <dbReference type="ChEBI" id="CHEBI:59789"/>
        <dbReference type="ChEBI" id="CHEBI:64428"/>
        <dbReference type="ChEBI" id="CHEBI:73599"/>
        <dbReference type="EC" id="2.8.4.4"/>
    </reaction>
</comment>
<comment type="cofactor">
    <cofactor evidence="1">
        <name>[4Fe-4S] cluster</name>
        <dbReference type="ChEBI" id="CHEBI:49883"/>
    </cofactor>
    <text evidence="1">Binds 2 [4Fe-4S] clusters. One cluster is coordinated with 3 cysteines and an exchangeable S-adenosyl-L-methionine.</text>
</comment>
<comment type="subcellular location">
    <subcellularLocation>
        <location evidence="1">Cytoplasm</location>
    </subcellularLocation>
</comment>
<comment type="similarity">
    <text evidence="1">Belongs to the methylthiotransferase family. RimO subfamily.</text>
</comment>
<feature type="chain" id="PRO_0000374971" description="Ribosomal protein uS12 methylthiotransferase RimO">
    <location>
        <begin position="1"/>
        <end position="441"/>
    </location>
</feature>
<feature type="domain" description="MTTase N-terminal" evidence="1">
    <location>
        <begin position="7"/>
        <end position="117"/>
    </location>
</feature>
<feature type="domain" description="Radical SAM core" evidence="2">
    <location>
        <begin position="134"/>
        <end position="371"/>
    </location>
</feature>
<feature type="domain" description="TRAM" evidence="1">
    <location>
        <begin position="374"/>
        <end position="440"/>
    </location>
</feature>
<feature type="binding site" evidence="1">
    <location>
        <position position="16"/>
    </location>
    <ligand>
        <name>[4Fe-4S] cluster</name>
        <dbReference type="ChEBI" id="CHEBI:49883"/>
        <label>1</label>
    </ligand>
</feature>
<feature type="binding site" evidence="1">
    <location>
        <position position="52"/>
    </location>
    <ligand>
        <name>[4Fe-4S] cluster</name>
        <dbReference type="ChEBI" id="CHEBI:49883"/>
        <label>1</label>
    </ligand>
</feature>
<feature type="binding site" evidence="1">
    <location>
        <position position="81"/>
    </location>
    <ligand>
        <name>[4Fe-4S] cluster</name>
        <dbReference type="ChEBI" id="CHEBI:49883"/>
        <label>1</label>
    </ligand>
</feature>
<feature type="binding site" evidence="1">
    <location>
        <position position="148"/>
    </location>
    <ligand>
        <name>[4Fe-4S] cluster</name>
        <dbReference type="ChEBI" id="CHEBI:49883"/>
        <label>2</label>
        <note>4Fe-4S-S-AdoMet</note>
    </ligand>
</feature>
<feature type="binding site" evidence="1">
    <location>
        <position position="152"/>
    </location>
    <ligand>
        <name>[4Fe-4S] cluster</name>
        <dbReference type="ChEBI" id="CHEBI:49883"/>
        <label>2</label>
        <note>4Fe-4S-S-AdoMet</note>
    </ligand>
</feature>
<feature type="binding site" evidence="1">
    <location>
        <position position="155"/>
    </location>
    <ligand>
        <name>[4Fe-4S] cluster</name>
        <dbReference type="ChEBI" id="CHEBI:49883"/>
        <label>2</label>
        <note>4Fe-4S-S-AdoMet</note>
    </ligand>
</feature>